<sequence>MKFSAVILAAGKGTRMYSNMPKVLHTLAGKPMVKHVIDTCTGLGAQNIHLVYGHGGDQMQAALAEEPVNWVLQAEQLGTGHAVDQASPQFEDDEKILVLYGDVPLISSETIESLLDAQPKGGIALLTVVLDNPTGYGRIVRKNGPVVAIVEQKDANEEQKLIKEINTGVMVATGGDLKRWLAGLNNDNAQGEYYLTDVIAAAHDEGNAVEAVHPVSPIEVEGVNDRAQLARLERAFQAAQAKKLLEQGVMLRDPARFDLRGELQCGLDVEIDVNVIIEGNVSLGDNVVIGAGCVLKDCEIDDNTIVRPYSVIEGATVGEQCTVGPFTRLRPGAEMRNDSHVGNFVEVKNARIGEGSKANHLTYLGDAEIGQRTNIGAGTITCNYDGANKFKTIIGNDVFVGSDSQLVAPLTIADGATIGAGTTLTKDVAEGELVITRAKERKVTGWQRPVKKK</sequence>
<feature type="chain" id="PRO_0000233875" description="Bifunctional protein GlmU">
    <location>
        <begin position="1"/>
        <end position="453"/>
    </location>
</feature>
<feature type="region of interest" description="Pyrophosphorylase" evidence="1">
    <location>
        <begin position="1"/>
        <end position="226"/>
    </location>
</feature>
<feature type="region of interest" description="Linker" evidence="1">
    <location>
        <begin position="227"/>
        <end position="247"/>
    </location>
</feature>
<feature type="region of interest" description="N-acetyltransferase" evidence="1">
    <location>
        <begin position="248"/>
        <end position="453"/>
    </location>
</feature>
<feature type="active site" description="Proton acceptor" evidence="1">
    <location>
        <position position="360"/>
    </location>
</feature>
<feature type="binding site" evidence="1">
    <location>
        <begin position="8"/>
        <end position="11"/>
    </location>
    <ligand>
        <name>UDP-N-acetyl-alpha-D-glucosamine</name>
        <dbReference type="ChEBI" id="CHEBI:57705"/>
    </ligand>
</feature>
<feature type="binding site" evidence="1">
    <location>
        <position position="22"/>
    </location>
    <ligand>
        <name>UDP-N-acetyl-alpha-D-glucosamine</name>
        <dbReference type="ChEBI" id="CHEBI:57705"/>
    </ligand>
</feature>
<feature type="binding site" evidence="1">
    <location>
        <position position="73"/>
    </location>
    <ligand>
        <name>UDP-N-acetyl-alpha-D-glucosamine</name>
        <dbReference type="ChEBI" id="CHEBI:57705"/>
    </ligand>
</feature>
<feature type="binding site" evidence="1">
    <location>
        <begin position="78"/>
        <end position="79"/>
    </location>
    <ligand>
        <name>UDP-N-acetyl-alpha-D-glucosamine</name>
        <dbReference type="ChEBI" id="CHEBI:57705"/>
    </ligand>
</feature>
<feature type="binding site" evidence="1">
    <location>
        <begin position="100"/>
        <end position="102"/>
    </location>
    <ligand>
        <name>UDP-N-acetyl-alpha-D-glucosamine</name>
        <dbReference type="ChEBI" id="CHEBI:57705"/>
    </ligand>
</feature>
<feature type="binding site" evidence="1">
    <location>
        <position position="102"/>
    </location>
    <ligand>
        <name>Mg(2+)</name>
        <dbReference type="ChEBI" id="CHEBI:18420"/>
    </ligand>
</feature>
<feature type="binding site" evidence="1">
    <location>
        <position position="137"/>
    </location>
    <ligand>
        <name>UDP-N-acetyl-alpha-D-glucosamine</name>
        <dbReference type="ChEBI" id="CHEBI:57705"/>
    </ligand>
</feature>
<feature type="binding site" evidence="1">
    <location>
        <position position="151"/>
    </location>
    <ligand>
        <name>UDP-N-acetyl-alpha-D-glucosamine</name>
        <dbReference type="ChEBI" id="CHEBI:57705"/>
    </ligand>
</feature>
<feature type="binding site" evidence="1">
    <location>
        <position position="166"/>
    </location>
    <ligand>
        <name>UDP-N-acetyl-alpha-D-glucosamine</name>
        <dbReference type="ChEBI" id="CHEBI:57705"/>
    </ligand>
</feature>
<feature type="binding site" evidence="1">
    <location>
        <position position="224"/>
    </location>
    <ligand>
        <name>Mg(2+)</name>
        <dbReference type="ChEBI" id="CHEBI:18420"/>
    </ligand>
</feature>
<feature type="binding site" evidence="1">
    <location>
        <position position="224"/>
    </location>
    <ligand>
        <name>UDP-N-acetyl-alpha-D-glucosamine</name>
        <dbReference type="ChEBI" id="CHEBI:57705"/>
    </ligand>
</feature>
<feature type="binding site" evidence="1">
    <location>
        <position position="330"/>
    </location>
    <ligand>
        <name>UDP-N-acetyl-alpha-D-glucosamine</name>
        <dbReference type="ChEBI" id="CHEBI:57705"/>
    </ligand>
</feature>
<feature type="binding site" evidence="1">
    <location>
        <position position="348"/>
    </location>
    <ligand>
        <name>UDP-N-acetyl-alpha-D-glucosamine</name>
        <dbReference type="ChEBI" id="CHEBI:57705"/>
    </ligand>
</feature>
<feature type="binding site" evidence="1">
    <location>
        <position position="363"/>
    </location>
    <ligand>
        <name>UDP-N-acetyl-alpha-D-glucosamine</name>
        <dbReference type="ChEBI" id="CHEBI:57705"/>
    </ligand>
</feature>
<feature type="binding site" evidence="1">
    <location>
        <position position="374"/>
    </location>
    <ligand>
        <name>UDP-N-acetyl-alpha-D-glucosamine</name>
        <dbReference type="ChEBI" id="CHEBI:57705"/>
    </ligand>
</feature>
<feature type="binding site" evidence="1">
    <location>
        <position position="377"/>
    </location>
    <ligand>
        <name>acetyl-CoA</name>
        <dbReference type="ChEBI" id="CHEBI:57288"/>
    </ligand>
</feature>
<feature type="binding site" evidence="1">
    <location>
        <begin position="383"/>
        <end position="384"/>
    </location>
    <ligand>
        <name>acetyl-CoA</name>
        <dbReference type="ChEBI" id="CHEBI:57288"/>
    </ligand>
</feature>
<feature type="binding site" evidence="1">
    <location>
        <position position="402"/>
    </location>
    <ligand>
        <name>acetyl-CoA</name>
        <dbReference type="ChEBI" id="CHEBI:57288"/>
    </ligand>
</feature>
<feature type="binding site" evidence="1">
    <location>
        <position position="420"/>
    </location>
    <ligand>
        <name>acetyl-CoA</name>
        <dbReference type="ChEBI" id="CHEBI:57288"/>
    </ligand>
</feature>
<feature type="binding site" evidence="1">
    <location>
        <position position="437"/>
    </location>
    <ligand>
        <name>acetyl-CoA</name>
        <dbReference type="ChEBI" id="CHEBI:57288"/>
    </ligand>
</feature>
<dbReference type="EC" id="2.7.7.23" evidence="1"/>
<dbReference type="EC" id="2.3.1.157" evidence="1"/>
<dbReference type="EMBL" id="AE016795">
    <property type="protein sequence ID" value="AAO09511.1"/>
    <property type="molecule type" value="Genomic_DNA"/>
</dbReference>
<dbReference type="RefSeq" id="WP_011079057.1">
    <property type="nucleotide sequence ID" value="NC_004459.3"/>
</dbReference>
<dbReference type="SMR" id="Q8DDG6"/>
<dbReference type="KEGG" id="vvu:VV1_1023"/>
<dbReference type="HOGENOM" id="CLU_029499_15_2_6"/>
<dbReference type="UniPathway" id="UPA00113">
    <property type="reaction ID" value="UER00532"/>
</dbReference>
<dbReference type="UniPathway" id="UPA00113">
    <property type="reaction ID" value="UER00533"/>
</dbReference>
<dbReference type="UniPathway" id="UPA00973"/>
<dbReference type="Proteomes" id="UP000002275">
    <property type="component" value="Chromosome 1"/>
</dbReference>
<dbReference type="GO" id="GO:0005737">
    <property type="term" value="C:cytoplasm"/>
    <property type="evidence" value="ECO:0007669"/>
    <property type="project" value="UniProtKB-SubCell"/>
</dbReference>
<dbReference type="GO" id="GO:0016020">
    <property type="term" value="C:membrane"/>
    <property type="evidence" value="ECO:0007669"/>
    <property type="project" value="GOC"/>
</dbReference>
<dbReference type="GO" id="GO:0019134">
    <property type="term" value="F:glucosamine-1-phosphate N-acetyltransferase activity"/>
    <property type="evidence" value="ECO:0007669"/>
    <property type="project" value="UniProtKB-UniRule"/>
</dbReference>
<dbReference type="GO" id="GO:0000287">
    <property type="term" value="F:magnesium ion binding"/>
    <property type="evidence" value="ECO:0007669"/>
    <property type="project" value="UniProtKB-UniRule"/>
</dbReference>
<dbReference type="GO" id="GO:0003977">
    <property type="term" value="F:UDP-N-acetylglucosamine diphosphorylase activity"/>
    <property type="evidence" value="ECO:0007669"/>
    <property type="project" value="UniProtKB-UniRule"/>
</dbReference>
<dbReference type="GO" id="GO:0000902">
    <property type="term" value="P:cell morphogenesis"/>
    <property type="evidence" value="ECO:0007669"/>
    <property type="project" value="UniProtKB-UniRule"/>
</dbReference>
<dbReference type="GO" id="GO:0071555">
    <property type="term" value="P:cell wall organization"/>
    <property type="evidence" value="ECO:0007669"/>
    <property type="project" value="UniProtKB-KW"/>
</dbReference>
<dbReference type="GO" id="GO:0009245">
    <property type="term" value="P:lipid A biosynthetic process"/>
    <property type="evidence" value="ECO:0007669"/>
    <property type="project" value="UniProtKB-UniRule"/>
</dbReference>
<dbReference type="GO" id="GO:0009252">
    <property type="term" value="P:peptidoglycan biosynthetic process"/>
    <property type="evidence" value="ECO:0007669"/>
    <property type="project" value="UniProtKB-UniRule"/>
</dbReference>
<dbReference type="GO" id="GO:0008360">
    <property type="term" value="P:regulation of cell shape"/>
    <property type="evidence" value="ECO:0007669"/>
    <property type="project" value="UniProtKB-KW"/>
</dbReference>
<dbReference type="GO" id="GO:0006048">
    <property type="term" value="P:UDP-N-acetylglucosamine biosynthetic process"/>
    <property type="evidence" value="ECO:0007669"/>
    <property type="project" value="UniProtKB-UniPathway"/>
</dbReference>
<dbReference type="CDD" id="cd02540">
    <property type="entry name" value="GT2_GlmU_N_bac"/>
    <property type="match status" value="1"/>
</dbReference>
<dbReference type="CDD" id="cd03353">
    <property type="entry name" value="LbH_GlmU_C"/>
    <property type="match status" value="1"/>
</dbReference>
<dbReference type="FunFam" id="3.90.550.10:FF:000006">
    <property type="entry name" value="Bifunctional protein GlmU"/>
    <property type="match status" value="1"/>
</dbReference>
<dbReference type="Gene3D" id="2.160.10.10">
    <property type="entry name" value="Hexapeptide repeat proteins"/>
    <property type="match status" value="1"/>
</dbReference>
<dbReference type="Gene3D" id="3.90.550.10">
    <property type="entry name" value="Spore Coat Polysaccharide Biosynthesis Protein SpsA, Chain A"/>
    <property type="match status" value="1"/>
</dbReference>
<dbReference type="HAMAP" id="MF_01631">
    <property type="entry name" value="GlmU"/>
    <property type="match status" value="1"/>
</dbReference>
<dbReference type="InterPro" id="IPR005882">
    <property type="entry name" value="Bifunctional_GlmU"/>
</dbReference>
<dbReference type="InterPro" id="IPR050065">
    <property type="entry name" value="GlmU-like"/>
</dbReference>
<dbReference type="InterPro" id="IPR038009">
    <property type="entry name" value="GlmU_C_LbH"/>
</dbReference>
<dbReference type="InterPro" id="IPR001451">
    <property type="entry name" value="Hexapep"/>
</dbReference>
<dbReference type="InterPro" id="IPR018357">
    <property type="entry name" value="Hexapep_transf_CS"/>
</dbReference>
<dbReference type="InterPro" id="IPR025877">
    <property type="entry name" value="MobA-like_NTP_Trfase"/>
</dbReference>
<dbReference type="InterPro" id="IPR029044">
    <property type="entry name" value="Nucleotide-diphossugar_trans"/>
</dbReference>
<dbReference type="InterPro" id="IPR011004">
    <property type="entry name" value="Trimer_LpxA-like_sf"/>
</dbReference>
<dbReference type="NCBIfam" id="TIGR01173">
    <property type="entry name" value="glmU"/>
    <property type="match status" value="1"/>
</dbReference>
<dbReference type="NCBIfam" id="NF006986">
    <property type="entry name" value="PRK09451.1"/>
    <property type="match status" value="1"/>
</dbReference>
<dbReference type="PANTHER" id="PTHR43584:SF3">
    <property type="entry name" value="BIFUNCTIONAL PROTEIN GLMU"/>
    <property type="match status" value="1"/>
</dbReference>
<dbReference type="PANTHER" id="PTHR43584">
    <property type="entry name" value="NUCLEOTIDYL TRANSFERASE"/>
    <property type="match status" value="1"/>
</dbReference>
<dbReference type="Pfam" id="PF00132">
    <property type="entry name" value="Hexapep"/>
    <property type="match status" value="1"/>
</dbReference>
<dbReference type="Pfam" id="PF14602">
    <property type="entry name" value="Hexapep_2"/>
    <property type="match status" value="1"/>
</dbReference>
<dbReference type="Pfam" id="PF12804">
    <property type="entry name" value="NTP_transf_3"/>
    <property type="match status" value="1"/>
</dbReference>
<dbReference type="SUPFAM" id="SSF53448">
    <property type="entry name" value="Nucleotide-diphospho-sugar transferases"/>
    <property type="match status" value="1"/>
</dbReference>
<dbReference type="SUPFAM" id="SSF51161">
    <property type="entry name" value="Trimeric LpxA-like enzymes"/>
    <property type="match status" value="1"/>
</dbReference>
<dbReference type="PROSITE" id="PS00101">
    <property type="entry name" value="HEXAPEP_TRANSFERASES"/>
    <property type="match status" value="1"/>
</dbReference>
<proteinExistence type="inferred from homology"/>
<accession>Q8DDG6</accession>
<protein>
    <recommendedName>
        <fullName evidence="1">Bifunctional protein GlmU</fullName>
    </recommendedName>
    <domain>
        <recommendedName>
            <fullName evidence="1">UDP-N-acetylglucosamine pyrophosphorylase</fullName>
            <ecNumber evidence="1">2.7.7.23</ecNumber>
        </recommendedName>
        <alternativeName>
            <fullName evidence="1">N-acetylglucosamine-1-phosphate uridyltransferase</fullName>
        </alternativeName>
    </domain>
    <domain>
        <recommendedName>
            <fullName evidence="1">Glucosamine-1-phosphate N-acetyltransferase</fullName>
            <ecNumber evidence="1">2.3.1.157</ecNumber>
        </recommendedName>
    </domain>
</protein>
<gene>
    <name evidence="1" type="primary">glmU</name>
    <name type="ordered locus">VV1_1023</name>
</gene>
<keyword id="KW-0012">Acyltransferase</keyword>
<keyword id="KW-0133">Cell shape</keyword>
<keyword id="KW-0961">Cell wall biogenesis/degradation</keyword>
<keyword id="KW-0963">Cytoplasm</keyword>
<keyword id="KW-0460">Magnesium</keyword>
<keyword id="KW-0479">Metal-binding</keyword>
<keyword id="KW-0511">Multifunctional enzyme</keyword>
<keyword id="KW-0548">Nucleotidyltransferase</keyword>
<keyword id="KW-0573">Peptidoglycan synthesis</keyword>
<keyword id="KW-0677">Repeat</keyword>
<keyword id="KW-0808">Transferase</keyword>
<comment type="function">
    <text evidence="1">Catalyzes the last two sequential reactions in the de novo biosynthetic pathway for UDP-N-acetylglucosamine (UDP-GlcNAc). The C-terminal domain catalyzes the transfer of acetyl group from acetyl coenzyme A to glucosamine-1-phosphate (GlcN-1-P) to produce N-acetylglucosamine-1-phosphate (GlcNAc-1-P), which is converted into UDP-GlcNAc by the transfer of uridine 5-monophosphate (from uridine 5-triphosphate), a reaction catalyzed by the N-terminal domain.</text>
</comment>
<comment type="catalytic activity">
    <reaction evidence="1">
        <text>alpha-D-glucosamine 1-phosphate + acetyl-CoA = N-acetyl-alpha-D-glucosamine 1-phosphate + CoA + H(+)</text>
        <dbReference type="Rhea" id="RHEA:13725"/>
        <dbReference type="ChEBI" id="CHEBI:15378"/>
        <dbReference type="ChEBI" id="CHEBI:57287"/>
        <dbReference type="ChEBI" id="CHEBI:57288"/>
        <dbReference type="ChEBI" id="CHEBI:57776"/>
        <dbReference type="ChEBI" id="CHEBI:58516"/>
        <dbReference type="EC" id="2.3.1.157"/>
    </reaction>
</comment>
<comment type="catalytic activity">
    <reaction evidence="1">
        <text>N-acetyl-alpha-D-glucosamine 1-phosphate + UTP + H(+) = UDP-N-acetyl-alpha-D-glucosamine + diphosphate</text>
        <dbReference type="Rhea" id="RHEA:13509"/>
        <dbReference type="ChEBI" id="CHEBI:15378"/>
        <dbReference type="ChEBI" id="CHEBI:33019"/>
        <dbReference type="ChEBI" id="CHEBI:46398"/>
        <dbReference type="ChEBI" id="CHEBI:57705"/>
        <dbReference type="ChEBI" id="CHEBI:57776"/>
        <dbReference type="EC" id="2.7.7.23"/>
    </reaction>
</comment>
<comment type="cofactor">
    <cofactor evidence="1">
        <name>Mg(2+)</name>
        <dbReference type="ChEBI" id="CHEBI:18420"/>
    </cofactor>
    <text evidence="1">Binds 1 Mg(2+) ion per subunit.</text>
</comment>
<comment type="pathway">
    <text evidence="1">Nucleotide-sugar biosynthesis; UDP-N-acetyl-alpha-D-glucosamine biosynthesis; N-acetyl-alpha-D-glucosamine 1-phosphate from alpha-D-glucosamine 6-phosphate (route II): step 2/2.</text>
</comment>
<comment type="pathway">
    <text evidence="1">Nucleotide-sugar biosynthesis; UDP-N-acetyl-alpha-D-glucosamine biosynthesis; UDP-N-acetyl-alpha-D-glucosamine from N-acetyl-alpha-D-glucosamine 1-phosphate: step 1/1.</text>
</comment>
<comment type="pathway">
    <text evidence="1">Bacterial outer membrane biogenesis; LPS lipid A biosynthesis.</text>
</comment>
<comment type="subunit">
    <text evidence="1">Homotrimer.</text>
</comment>
<comment type="subcellular location">
    <subcellularLocation>
        <location evidence="1">Cytoplasm</location>
    </subcellularLocation>
</comment>
<comment type="similarity">
    <text evidence="1">In the N-terminal section; belongs to the N-acetylglucosamine-1-phosphate uridyltransferase family.</text>
</comment>
<comment type="similarity">
    <text evidence="1">In the C-terminal section; belongs to the transferase hexapeptide repeat family.</text>
</comment>
<organism>
    <name type="scientific">Vibrio vulnificus (strain CMCP6)</name>
    <dbReference type="NCBI Taxonomy" id="216895"/>
    <lineage>
        <taxon>Bacteria</taxon>
        <taxon>Pseudomonadati</taxon>
        <taxon>Pseudomonadota</taxon>
        <taxon>Gammaproteobacteria</taxon>
        <taxon>Vibrionales</taxon>
        <taxon>Vibrionaceae</taxon>
        <taxon>Vibrio</taxon>
    </lineage>
</organism>
<evidence type="ECO:0000255" key="1">
    <source>
        <dbReference type="HAMAP-Rule" id="MF_01631"/>
    </source>
</evidence>
<name>GLMU_VIBVU</name>
<reference key="1">
    <citation type="submission" date="2002-12" db="EMBL/GenBank/DDBJ databases">
        <title>Complete genome sequence of Vibrio vulnificus CMCP6.</title>
        <authorList>
            <person name="Rhee J.H."/>
            <person name="Kim S.Y."/>
            <person name="Chung S.S."/>
            <person name="Kim J.J."/>
            <person name="Moon Y.H."/>
            <person name="Jeong H."/>
            <person name="Choy H.E."/>
        </authorList>
    </citation>
    <scope>NUCLEOTIDE SEQUENCE [LARGE SCALE GENOMIC DNA]</scope>
    <source>
        <strain>CMCP6</strain>
    </source>
</reference>